<dbReference type="EMBL" id="CP000750">
    <property type="protein sequence ID" value="ABS02210.1"/>
    <property type="molecule type" value="Genomic_DNA"/>
</dbReference>
<dbReference type="SMR" id="A6W5X1"/>
<dbReference type="STRING" id="266940.Krad_0721"/>
<dbReference type="KEGG" id="kra:Krad_0721"/>
<dbReference type="eggNOG" id="COG0103">
    <property type="taxonomic scope" value="Bacteria"/>
</dbReference>
<dbReference type="HOGENOM" id="CLU_046483_2_0_11"/>
<dbReference type="OrthoDB" id="9803965at2"/>
<dbReference type="Proteomes" id="UP000001116">
    <property type="component" value="Chromosome"/>
</dbReference>
<dbReference type="GO" id="GO:0005737">
    <property type="term" value="C:cytoplasm"/>
    <property type="evidence" value="ECO:0007669"/>
    <property type="project" value="UniProtKB-ARBA"/>
</dbReference>
<dbReference type="GO" id="GO:0015935">
    <property type="term" value="C:small ribosomal subunit"/>
    <property type="evidence" value="ECO:0007669"/>
    <property type="project" value="TreeGrafter"/>
</dbReference>
<dbReference type="GO" id="GO:0003723">
    <property type="term" value="F:RNA binding"/>
    <property type="evidence" value="ECO:0007669"/>
    <property type="project" value="TreeGrafter"/>
</dbReference>
<dbReference type="GO" id="GO:0003735">
    <property type="term" value="F:structural constituent of ribosome"/>
    <property type="evidence" value="ECO:0007669"/>
    <property type="project" value="InterPro"/>
</dbReference>
<dbReference type="GO" id="GO:0006412">
    <property type="term" value="P:translation"/>
    <property type="evidence" value="ECO:0007669"/>
    <property type="project" value="UniProtKB-UniRule"/>
</dbReference>
<dbReference type="FunFam" id="3.30.230.10:FF:000001">
    <property type="entry name" value="30S ribosomal protein S9"/>
    <property type="match status" value="1"/>
</dbReference>
<dbReference type="Gene3D" id="3.30.230.10">
    <property type="match status" value="1"/>
</dbReference>
<dbReference type="HAMAP" id="MF_00532_B">
    <property type="entry name" value="Ribosomal_uS9_B"/>
    <property type="match status" value="1"/>
</dbReference>
<dbReference type="InterPro" id="IPR020568">
    <property type="entry name" value="Ribosomal_Su5_D2-typ_SF"/>
</dbReference>
<dbReference type="InterPro" id="IPR000754">
    <property type="entry name" value="Ribosomal_uS9"/>
</dbReference>
<dbReference type="InterPro" id="IPR023035">
    <property type="entry name" value="Ribosomal_uS9_bac/plastid"/>
</dbReference>
<dbReference type="InterPro" id="IPR020574">
    <property type="entry name" value="Ribosomal_uS9_CS"/>
</dbReference>
<dbReference type="InterPro" id="IPR014721">
    <property type="entry name" value="Ribsml_uS5_D2-typ_fold_subgr"/>
</dbReference>
<dbReference type="NCBIfam" id="NF001099">
    <property type="entry name" value="PRK00132.1"/>
    <property type="match status" value="1"/>
</dbReference>
<dbReference type="PANTHER" id="PTHR21569">
    <property type="entry name" value="RIBOSOMAL PROTEIN S9"/>
    <property type="match status" value="1"/>
</dbReference>
<dbReference type="PANTHER" id="PTHR21569:SF1">
    <property type="entry name" value="SMALL RIBOSOMAL SUBUNIT PROTEIN US9M"/>
    <property type="match status" value="1"/>
</dbReference>
<dbReference type="Pfam" id="PF00380">
    <property type="entry name" value="Ribosomal_S9"/>
    <property type="match status" value="1"/>
</dbReference>
<dbReference type="SUPFAM" id="SSF54211">
    <property type="entry name" value="Ribosomal protein S5 domain 2-like"/>
    <property type="match status" value="1"/>
</dbReference>
<dbReference type="PROSITE" id="PS00360">
    <property type="entry name" value="RIBOSOMAL_S9"/>
    <property type="match status" value="1"/>
</dbReference>
<reference key="1">
    <citation type="journal article" date="2008" name="PLoS ONE">
        <title>Survival in nuclear waste, extreme resistance, and potential applications gleaned from the genome sequence of Kineococcus radiotolerans SRS30216.</title>
        <authorList>
            <person name="Bagwell C.E."/>
            <person name="Bhat S."/>
            <person name="Hawkins G.M."/>
            <person name="Smith B.W."/>
            <person name="Biswas T."/>
            <person name="Hoover T.R."/>
            <person name="Saunders E."/>
            <person name="Han C.S."/>
            <person name="Tsodikov O.V."/>
            <person name="Shimkets L.J."/>
        </authorList>
    </citation>
    <scope>NUCLEOTIDE SEQUENCE [LARGE SCALE GENOMIC DNA]</scope>
    <source>
        <strain>ATCC BAA-149 / DSM 14245 / SRS30216</strain>
    </source>
</reference>
<accession>A6W5X1</accession>
<organism>
    <name type="scientific">Kineococcus radiotolerans (strain ATCC BAA-149 / DSM 14245 / SRS30216)</name>
    <dbReference type="NCBI Taxonomy" id="266940"/>
    <lineage>
        <taxon>Bacteria</taxon>
        <taxon>Bacillati</taxon>
        <taxon>Actinomycetota</taxon>
        <taxon>Actinomycetes</taxon>
        <taxon>Kineosporiales</taxon>
        <taxon>Kineosporiaceae</taxon>
        <taxon>Kineococcus</taxon>
    </lineage>
</organism>
<protein>
    <recommendedName>
        <fullName evidence="1">Small ribosomal subunit protein uS9</fullName>
    </recommendedName>
    <alternativeName>
        <fullName evidence="3">30S ribosomal protein S9</fullName>
    </alternativeName>
</protein>
<proteinExistence type="inferred from homology"/>
<name>RS9_KINRD</name>
<sequence length="167" mass="18000">MSEYTTEADTVEDITESDEFTGTYTSESSTPATGGNSIIAPGGATGRRKEAVARVRIVPGTGKWTINGRELDNYFPNKVHQQLVNEPFRVTALEGSFDVIARIHGGGSSGQAGALRLGVARALNAIDLEANRPQLKKAGFLTRDPRATERKKAGLKKARKAPQFSKR</sequence>
<keyword id="KW-1185">Reference proteome</keyword>
<keyword id="KW-0687">Ribonucleoprotein</keyword>
<keyword id="KW-0689">Ribosomal protein</keyword>
<gene>
    <name evidence="1" type="primary">rpsI</name>
    <name type="ordered locus">Krad_0721</name>
</gene>
<comment type="similarity">
    <text evidence="1">Belongs to the universal ribosomal protein uS9 family.</text>
</comment>
<evidence type="ECO:0000255" key="1">
    <source>
        <dbReference type="HAMAP-Rule" id="MF_00532"/>
    </source>
</evidence>
<evidence type="ECO:0000256" key="2">
    <source>
        <dbReference type="SAM" id="MobiDB-lite"/>
    </source>
</evidence>
<evidence type="ECO:0000305" key="3"/>
<feature type="chain" id="PRO_1000081820" description="Small ribosomal subunit protein uS9">
    <location>
        <begin position="1"/>
        <end position="167"/>
    </location>
</feature>
<feature type="region of interest" description="Disordered" evidence="2">
    <location>
        <begin position="1"/>
        <end position="45"/>
    </location>
</feature>
<feature type="region of interest" description="Disordered" evidence="2">
    <location>
        <begin position="137"/>
        <end position="167"/>
    </location>
</feature>
<feature type="compositionally biased region" description="Acidic residues" evidence="2">
    <location>
        <begin position="9"/>
        <end position="19"/>
    </location>
</feature>
<feature type="compositionally biased region" description="Polar residues" evidence="2">
    <location>
        <begin position="20"/>
        <end position="36"/>
    </location>
</feature>
<feature type="compositionally biased region" description="Basic and acidic residues" evidence="2">
    <location>
        <begin position="143"/>
        <end position="152"/>
    </location>
</feature>
<feature type="compositionally biased region" description="Basic residues" evidence="2">
    <location>
        <begin position="153"/>
        <end position="167"/>
    </location>
</feature>